<protein>
    <recommendedName>
        <fullName evidence="1">Probable nicotinate-nucleotide adenylyltransferase</fullName>
        <ecNumber evidence="1">2.7.7.18</ecNumber>
    </recommendedName>
    <alternativeName>
        <fullName evidence="1">Deamido-NAD(+) diphosphorylase</fullName>
    </alternativeName>
    <alternativeName>
        <fullName evidence="1">Deamido-NAD(+) pyrophosphorylase</fullName>
    </alternativeName>
    <alternativeName>
        <fullName evidence="1">Nicotinate mononucleotide adenylyltransferase</fullName>
        <shortName evidence="1">NaMN adenylyltransferase</shortName>
    </alternativeName>
</protein>
<accession>A5ITC1</accession>
<dbReference type="EC" id="2.7.7.18" evidence="1"/>
<dbReference type="EMBL" id="CP000703">
    <property type="protein sequence ID" value="ABQ49444.1"/>
    <property type="molecule type" value="Genomic_DNA"/>
</dbReference>
<dbReference type="RefSeq" id="WP_000725167.1">
    <property type="nucleotide sequence ID" value="NC_009487.1"/>
</dbReference>
<dbReference type="SMR" id="A5ITC1"/>
<dbReference type="KEGG" id="saj:SaurJH9_1651"/>
<dbReference type="HOGENOM" id="CLU_069765_3_1_9"/>
<dbReference type="UniPathway" id="UPA00253">
    <property type="reaction ID" value="UER00332"/>
</dbReference>
<dbReference type="GO" id="GO:0005524">
    <property type="term" value="F:ATP binding"/>
    <property type="evidence" value="ECO:0007669"/>
    <property type="project" value="UniProtKB-KW"/>
</dbReference>
<dbReference type="GO" id="GO:0004515">
    <property type="term" value="F:nicotinate-nucleotide adenylyltransferase activity"/>
    <property type="evidence" value="ECO:0007669"/>
    <property type="project" value="UniProtKB-UniRule"/>
</dbReference>
<dbReference type="GO" id="GO:0009435">
    <property type="term" value="P:NAD biosynthetic process"/>
    <property type="evidence" value="ECO:0007669"/>
    <property type="project" value="UniProtKB-UniRule"/>
</dbReference>
<dbReference type="CDD" id="cd02165">
    <property type="entry name" value="NMNAT"/>
    <property type="match status" value="1"/>
</dbReference>
<dbReference type="FunFam" id="3.40.50.620:FF:000189">
    <property type="entry name" value="Probable nicotinate-nucleotide adenylyltransferase"/>
    <property type="match status" value="1"/>
</dbReference>
<dbReference type="Gene3D" id="3.40.50.620">
    <property type="entry name" value="HUPs"/>
    <property type="match status" value="1"/>
</dbReference>
<dbReference type="HAMAP" id="MF_00244">
    <property type="entry name" value="NaMN_adenylyltr"/>
    <property type="match status" value="1"/>
</dbReference>
<dbReference type="InterPro" id="IPR004821">
    <property type="entry name" value="Cyt_trans-like"/>
</dbReference>
<dbReference type="InterPro" id="IPR005248">
    <property type="entry name" value="NadD/NMNAT"/>
</dbReference>
<dbReference type="InterPro" id="IPR014729">
    <property type="entry name" value="Rossmann-like_a/b/a_fold"/>
</dbReference>
<dbReference type="NCBIfam" id="TIGR00482">
    <property type="entry name" value="nicotinate (nicotinamide) nucleotide adenylyltransferase"/>
    <property type="match status" value="1"/>
</dbReference>
<dbReference type="NCBIfam" id="NF000840">
    <property type="entry name" value="PRK00071.1-3"/>
    <property type="match status" value="1"/>
</dbReference>
<dbReference type="NCBIfam" id="NF000841">
    <property type="entry name" value="PRK00071.1-4"/>
    <property type="match status" value="1"/>
</dbReference>
<dbReference type="PANTHER" id="PTHR39321">
    <property type="entry name" value="NICOTINATE-NUCLEOTIDE ADENYLYLTRANSFERASE-RELATED"/>
    <property type="match status" value="1"/>
</dbReference>
<dbReference type="PANTHER" id="PTHR39321:SF3">
    <property type="entry name" value="PHOSPHOPANTETHEINE ADENYLYLTRANSFERASE"/>
    <property type="match status" value="1"/>
</dbReference>
<dbReference type="Pfam" id="PF01467">
    <property type="entry name" value="CTP_transf_like"/>
    <property type="match status" value="1"/>
</dbReference>
<dbReference type="SUPFAM" id="SSF52374">
    <property type="entry name" value="Nucleotidylyl transferase"/>
    <property type="match status" value="1"/>
</dbReference>
<feature type="chain" id="PRO_1000078394" description="Probable nicotinate-nucleotide adenylyltransferase">
    <location>
        <begin position="1"/>
        <end position="189"/>
    </location>
</feature>
<reference key="1">
    <citation type="submission" date="2007-05" db="EMBL/GenBank/DDBJ databases">
        <title>Complete sequence of chromosome of Staphylococcus aureus subsp. aureus JH9.</title>
        <authorList>
            <consortium name="US DOE Joint Genome Institute"/>
            <person name="Copeland A."/>
            <person name="Lucas S."/>
            <person name="Lapidus A."/>
            <person name="Barry K."/>
            <person name="Detter J.C."/>
            <person name="Glavina del Rio T."/>
            <person name="Hammon N."/>
            <person name="Israni S."/>
            <person name="Pitluck S."/>
            <person name="Chain P."/>
            <person name="Malfatti S."/>
            <person name="Shin M."/>
            <person name="Vergez L."/>
            <person name="Schmutz J."/>
            <person name="Larimer F."/>
            <person name="Land M."/>
            <person name="Hauser L."/>
            <person name="Kyrpides N."/>
            <person name="Kim E."/>
            <person name="Tomasz A."/>
            <person name="Richardson P."/>
        </authorList>
    </citation>
    <scope>NUCLEOTIDE SEQUENCE [LARGE SCALE GENOMIC DNA]</scope>
    <source>
        <strain>JH9</strain>
    </source>
</reference>
<gene>
    <name evidence="1" type="primary">nadD</name>
    <name type="ordered locus">SaurJH9_1651</name>
</gene>
<keyword id="KW-0067">ATP-binding</keyword>
<keyword id="KW-0520">NAD</keyword>
<keyword id="KW-0547">Nucleotide-binding</keyword>
<keyword id="KW-0548">Nucleotidyltransferase</keyword>
<keyword id="KW-0662">Pyridine nucleotide biosynthesis</keyword>
<keyword id="KW-0808">Transferase</keyword>
<name>NADD_STAA9</name>
<organism>
    <name type="scientific">Staphylococcus aureus (strain JH9)</name>
    <dbReference type="NCBI Taxonomy" id="359786"/>
    <lineage>
        <taxon>Bacteria</taxon>
        <taxon>Bacillati</taxon>
        <taxon>Bacillota</taxon>
        <taxon>Bacilli</taxon>
        <taxon>Bacillales</taxon>
        <taxon>Staphylococcaceae</taxon>
        <taxon>Staphylococcus</taxon>
    </lineage>
</organism>
<proteinExistence type="inferred from homology"/>
<evidence type="ECO:0000255" key="1">
    <source>
        <dbReference type="HAMAP-Rule" id="MF_00244"/>
    </source>
</evidence>
<sequence>MKKIVLYGGQFNPIHTAHMIVASEVFHELQPDEFYFLPSFMSPLKKHNNFIDVQHRLTMIQMIIDELGFGDICDDEIKRGGQSYTYDTIKAFKEQHKDSELYFVIGTDQYNQLEKWYQIEYLKEMVTFVVVNRDKNSQNVENAMIAIQIPRVDISSTMIRQRVSEGKSIQVLVPKSVENYIKGEGLYEH</sequence>
<comment type="function">
    <text evidence="1">Catalyzes the reversible adenylation of nicotinate mononucleotide (NaMN) to nicotinic acid adenine dinucleotide (NaAD).</text>
</comment>
<comment type="catalytic activity">
    <reaction evidence="1">
        <text>nicotinate beta-D-ribonucleotide + ATP + H(+) = deamido-NAD(+) + diphosphate</text>
        <dbReference type="Rhea" id="RHEA:22860"/>
        <dbReference type="ChEBI" id="CHEBI:15378"/>
        <dbReference type="ChEBI" id="CHEBI:30616"/>
        <dbReference type="ChEBI" id="CHEBI:33019"/>
        <dbReference type="ChEBI" id="CHEBI:57502"/>
        <dbReference type="ChEBI" id="CHEBI:58437"/>
        <dbReference type="EC" id="2.7.7.18"/>
    </reaction>
</comment>
<comment type="pathway">
    <text evidence="1">Cofactor biosynthesis; NAD(+) biosynthesis; deamido-NAD(+) from nicotinate D-ribonucleotide: step 1/1.</text>
</comment>
<comment type="similarity">
    <text evidence="1">Belongs to the NadD family.</text>
</comment>